<reference key="1">
    <citation type="journal article" date="1990" name="Mol. Cell. Biol.">
        <title>Isolation of the URA5 gene from Cryptococcus neoformans var. neoformans and its use as a selective marker for transformation.</title>
        <authorList>
            <person name="Edman J.C."/>
            <person name="Kwon-Chung K.J."/>
        </authorList>
    </citation>
    <scope>NUCLEOTIDE SEQUENCE [GENOMIC DNA]</scope>
</reference>
<reference key="2">
    <citation type="journal article" date="1995" name="J. Clin. Microbiol.">
        <title>Genetic relatedness of Cryptococcus neoformans clinical isolates grouped with the repetitive DNA probe CNRE-1.</title>
        <authorList>
            <person name="Chen F."/>
            <person name="Currie B.P."/>
            <person name="Chen L.C."/>
            <person name="Spitzer S.G."/>
            <person name="Spitzer E.D."/>
            <person name="Casadevall A."/>
        </authorList>
    </citation>
    <scope>NUCLEOTIDE SEQUENCE [GENOMIC DNA]</scope>
    <source>
        <strain>J15</strain>
        <strain>J17</strain>
        <strain>J19</strain>
        <strain>J21</strain>
        <strain>J24</strain>
        <strain>J25</strain>
        <strain>J26</strain>
    </source>
</reference>
<reference key="3">
    <citation type="submission" date="1996-10" db="EMBL/GenBank/DDBJ databases">
        <authorList>
            <person name="Franzot S.P."/>
            <person name="Hamdan J.S."/>
            <person name="Casadevall A."/>
        </authorList>
    </citation>
    <scope>NUCLEOTIDE SEQUENCE [GENOMIC DNA]</scope>
    <source>
        <strain>C24</strain>
        <strain>C25</strain>
        <strain>C5</strain>
        <strain>C7</strain>
        <strain>E12</strain>
        <strain>E4</strain>
        <strain>E9</strain>
    </source>
</reference>
<reference key="4">
    <citation type="submission" date="1997-11" db="EMBL/GenBank/DDBJ databases">
        <authorList>
            <person name="Franzot S.P."/>
            <person name="Fries B.C."/>
            <person name="Casadevall A."/>
        </authorList>
    </citation>
    <scope>NUCLEOTIDE SEQUENCE [GENOMIC DNA]</scope>
    <source>
        <strain>184</strain>
        <strain>3502</strain>
        <strain>ATCC 24064 / CBS 7812 / 68</strain>
    </source>
</reference>
<reference key="5">
    <citation type="thesis" date="2001" institute="University of Western Sydney / Campbelltown" country="Australia">
        <title>The URA5 gene of Cryptococcus neoformans: its use as an auxotrophic selection marker for biolistic transformation and as a target for RFLP targeting.</title>
        <authorList>
            <person name="Jackson S."/>
        </authorList>
    </citation>
    <scope>NUCLEOTIDE SEQUENCE [GENOMIC DNA]</scope>
    <source>
        <strain>WM628</strain>
    </source>
</reference>
<reference key="6">
    <citation type="journal article" date="2005" name="Science">
        <title>The genome of the basidiomycetous yeast and human pathogen Cryptococcus neoformans.</title>
        <authorList>
            <person name="Loftus B.J."/>
            <person name="Fung E."/>
            <person name="Roncaglia P."/>
            <person name="Rowley D."/>
            <person name="Amedeo P."/>
            <person name="Bruno D."/>
            <person name="Vamathevan J."/>
            <person name="Miranda M."/>
            <person name="Anderson I.J."/>
            <person name="Fraser J.A."/>
            <person name="Allen J.E."/>
            <person name="Bosdet I.E."/>
            <person name="Brent M.R."/>
            <person name="Chiu R."/>
            <person name="Doering T.L."/>
            <person name="Donlin M.J."/>
            <person name="D'Souza C.A."/>
            <person name="Fox D.S."/>
            <person name="Grinberg V."/>
            <person name="Fu J."/>
            <person name="Fukushima M."/>
            <person name="Haas B.J."/>
            <person name="Huang J.C."/>
            <person name="Janbon G."/>
            <person name="Jones S.J.M."/>
            <person name="Koo H.L."/>
            <person name="Krzywinski M.I."/>
            <person name="Kwon-Chung K.J."/>
            <person name="Lengeler K.B."/>
            <person name="Maiti R."/>
            <person name="Marra M.A."/>
            <person name="Marra R.E."/>
            <person name="Mathewson C.A."/>
            <person name="Mitchell T.G."/>
            <person name="Pertea M."/>
            <person name="Riggs F.R."/>
            <person name="Salzberg S.L."/>
            <person name="Schein J.E."/>
            <person name="Shvartsbeyn A."/>
            <person name="Shin H."/>
            <person name="Shumway M."/>
            <person name="Specht C.A."/>
            <person name="Suh B.B."/>
            <person name="Tenney A."/>
            <person name="Utterback T.R."/>
            <person name="Wickes B.L."/>
            <person name="Wortman J.R."/>
            <person name="Wye N.H."/>
            <person name="Kronstad J.W."/>
            <person name="Lodge J.K."/>
            <person name="Heitman J."/>
            <person name="Davis R.W."/>
            <person name="Fraser C.M."/>
            <person name="Hyman R.W."/>
        </authorList>
    </citation>
    <scope>NUCLEOTIDE SEQUENCE [LARGE SCALE GENOMIC DNA]</scope>
    <source>
        <strain>JEC21 / ATCC MYA-565</strain>
    </source>
</reference>
<gene>
    <name type="primary">URA5</name>
    <name type="ordered locus">CNG03730</name>
</gene>
<organism>
    <name type="scientific">Cryptococcus neoformans var. neoformans serotype D (strain JEC21 / ATCC MYA-565)</name>
    <name type="common">Filobasidiella neoformans</name>
    <dbReference type="NCBI Taxonomy" id="214684"/>
    <lineage>
        <taxon>Eukaryota</taxon>
        <taxon>Fungi</taxon>
        <taxon>Dikarya</taxon>
        <taxon>Basidiomycota</taxon>
        <taxon>Agaricomycotina</taxon>
        <taxon>Tremellomycetes</taxon>
        <taxon>Tremellales</taxon>
        <taxon>Cryptococcaceae</taxon>
        <taxon>Cryptococcus</taxon>
        <taxon>Cryptococcus neoformans species complex</taxon>
    </lineage>
</organism>
<proteinExistence type="inferred from homology"/>
<comment type="function">
    <text evidence="1">Catalyzes the transfer of a ribosyl phosphate group from 5-phosphoribose 1-diphosphate to orotate, leading to the formation of orotidine monophosphate (OMP).</text>
</comment>
<comment type="catalytic activity">
    <reaction>
        <text>orotidine 5'-phosphate + diphosphate = orotate + 5-phospho-alpha-D-ribose 1-diphosphate</text>
        <dbReference type="Rhea" id="RHEA:10380"/>
        <dbReference type="ChEBI" id="CHEBI:30839"/>
        <dbReference type="ChEBI" id="CHEBI:33019"/>
        <dbReference type="ChEBI" id="CHEBI:57538"/>
        <dbReference type="ChEBI" id="CHEBI:58017"/>
        <dbReference type="EC" id="2.4.2.10"/>
    </reaction>
</comment>
<comment type="pathway">
    <text>Pyrimidine metabolism; UMP biosynthesis via de novo pathway; UMP from orotate: step 1/2.</text>
</comment>
<comment type="subunit">
    <text evidence="1">Homodimer.</text>
</comment>
<comment type="similarity">
    <text evidence="2">Belongs to the purine/pyrimidine phosphoribosyltransferase family. PyrE subfamily.</text>
</comment>
<dbReference type="EC" id="2.4.2.10"/>
<dbReference type="EMBL" id="M34606">
    <property type="protein sequence ID" value="AAA33076.1"/>
    <property type="molecule type" value="Genomic_DNA"/>
</dbReference>
<dbReference type="EMBL" id="L38582">
    <property type="protein sequence ID" value="AAA99182.1"/>
    <property type="molecule type" value="Genomic_DNA"/>
</dbReference>
<dbReference type="EMBL" id="L38583">
    <property type="protein sequence ID" value="AAA99183.1"/>
    <property type="molecule type" value="Genomic_DNA"/>
</dbReference>
<dbReference type="EMBL" id="L38584">
    <property type="protein sequence ID" value="AAA99184.1"/>
    <property type="molecule type" value="Genomic_DNA"/>
</dbReference>
<dbReference type="EMBL" id="L38585">
    <property type="protein sequence ID" value="AAA99185.1"/>
    <property type="molecule type" value="Genomic_DNA"/>
</dbReference>
<dbReference type="EMBL" id="L38586">
    <property type="protein sequence ID" value="AAA99186.1"/>
    <property type="molecule type" value="Genomic_DNA"/>
</dbReference>
<dbReference type="EMBL" id="L38587">
    <property type="protein sequence ID" value="AAA99187.1"/>
    <property type="molecule type" value="Genomic_DNA"/>
</dbReference>
<dbReference type="EMBL" id="L38588">
    <property type="protein sequence ID" value="AAA99188.1"/>
    <property type="molecule type" value="Genomic_DNA"/>
</dbReference>
<dbReference type="EMBL" id="U67723">
    <property type="protein sequence ID" value="AAB17140.1"/>
    <property type="molecule type" value="Genomic_DNA"/>
</dbReference>
<dbReference type="EMBL" id="U67724">
    <property type="protein sequence ID" value="AAB17141.1"/>
    <property type="molecule type" value="Genomic_DNA"/>
</dbReference>
<dbReference type="EMBL" id="U67725">
    <property type="protein sequence ID" value="AAB17142.1"/>
    <property type="molecule type" value="Genomic_DNA"/>
</dbReference>
<dbReference type="EMBL" id="U67726">
    <property type="protein sequence ID" value="AAB17143.1"/>
    <property type="molecule type" value="Genomic_DNA"/>
</dbReference>
<dbReference type="EMBL" id="U67728">
    <property type="protein sequence ID" value="AAB17145.1"/>
    <property type="molecule type" value="Genomic_DNA"/>
</dbReference>
<dbReference type="EMBL" id="U67730">
    <property type="protein sequence ID" value="AAB17147.1"/>
    <property type="molecule type" value="Genomic_DNA"/>
</dbReference>
<dbReference type="EMBL" id="U67731">
    <property type="protein sequence ID" value="AAB17148.1"/>
    <property type="molecule type" value="Genomic_DNA"/>
</dbReference>
<dbReference type="EMBL" id="AF032430">
    <property type="protein sequence ID" value="AAB86885.1"/>
    <property type="molecule type" value="Genomic_DNA"/>
</dbReference>
<dbReference type="EMBL" id="AF032432">
    <property type="protein sequence ID" value="AAB86887.1"/>
    <property type="molecule type" value="Genomic_DNA"/>
</dbReference>
<dbReference type="EMBL" id="AF032434">
    <property type="protein sequence ID" value="AAB86889.1"/>
    <property type="molecule type" value="Genomic_DNA"/>
</dbReference>
<dbReference type="EMBL" id="AJ555829">
    <property type="protein sequence ID" value="CAD88485.1"/>
    <property type="molecule type" value="Genomic_DNA"/>
</dbReference>
<dbReference type="EMBL" id="AE017347">
    <property type="protein sequence ID" value="AAW44772.1"/>
    <property type="molecule type" value="Genomic_DNA"/>
</dbReference>
<dbReference type="PIR" id="A36459">
    <property type="entry name" value="A36459"/>
</dbReference>
<dbReference type="RefSeq" id="XP_572079.1">
    <property type="nucleotide sequence ID" value="XM_572079.1"/>
</dbReference>
<dbReference type="SMR" id="P0CS95"/>
<dbReference type="FunCoup" id="P0CS95">
    <property type="interactions" value="277"/>
</dbReference>
<dbReference type="STRING" id="214684.P0CS95"/>
<dbReference type="PaxDb" id="214684-P0CS95"/>
<dbReference type="EnsemblFungi" id="AAW44772">
    <property type="protein sequence ID" value="AAW44772"/>
    <property type="gene ID" value="CNG03730"/>
</dbReference>
<dbReference type="GeneID" id="3258511"/>
<dbReference type="KEGG" id="cne:CNG03730"/>
<dbReference type="VEuPathDB" id="FungiDB:CNG03730"/>
<dbReference type="eggNOG" id="KOG1377">
    <property type="taxonomic scope" value="Eukaryota"/>
</dbReference>
<dbReference type="HOGENOM" id="CLU_074878_0_1_1"/>
<dbReference type="InParanoid" id="P0CS95"/>
<dbReference type="OMA" id="SPFFMNA"/>
<dbReference type="OrthoDB" id="5553476at2759"/>
<dbReference type="UniPathway" id="UPA00070">
    <property type="reaction ID" value="UER00119"/>
</dbReference>
<dbReference type="PHI-base" id="PHI:687"/>
<dbReference type="Proteomes" id="UP000002149">
    <property type="component" value="Chromosome 7"/>
</dbReference>
<dbReference type="GO" id="GO:0005737">
    <property type="term" value="C:cytoplasm"/>
    <property type="evidence" value="ECO:0000318"/>
    <property type="project" value="GO_Central"/>
</dbReference>
<dbReference type="GO" id="GO:0004588">
    <property type="term" value="F:orotate phosphoribosyltransferase activity"/>
    <property type="evidence" value="ECO:0000318"/>
    <property type="project" value="GO_Central"/>
</dbReference>
<dbReference type="GO" id="GO:0006207">
    <property type="term" value="P:'de novo' pyrimidine nucleobase biosynthetic process"/>
    <property type="evidence" value="ECO:0000318"/>
    <property type="project" value="GO_Central"/>
</dbReference>
<dbReference type="GO" id="GO:0044205">
    <property type="term" value="P:'de novo' UMP biosynthetic process"/>
    <property type="evidence" value="ECO:0007669"/>
    <property type="project" value="UniProtKB-UniPathway"/>
</dbReference>
<dbReference type="GO" id="GO:0006221">
    <property type="term" value="P:pyrimidine nucleotide biosynthetic process"/>
    <property type="evidence" value="ECO:0000318"/>
    <property type="project" value="GO_Central"/>
</dbReference>
<dbReference type="GO" id="GO:0046132">
    <property type="term" value="P:pyrimidine ribonucleoside biosynthetic process"/>
    <property type="evidence" value="ECO:0000318"/>
    <property type="project" value="GO_Central"/>
</dbReference>
<dbReference type="CDD" id="cd06223">
    <property type="entry name" value="PRTases_typeI"/>
    <property type="match status" value="1"/>
</dbReference>
<dbReference type="FunFam" id="3.40.50.2020:FF:000008">
    <property type="entry name" value="Orotate phosphoribosyltransferase"/>
    <property type="match status" value="1"/>
</dbReference>
<dbReference type="Gene3D" id="3.40.50.2020">
    <property type="match status" value="1"/>
</dbReference>
<dbReference type="HAMAP" id="MF_01208">
    <property type="entry name" value="PyrE"/>
    <property type="match status" value="1"/>
</dbReference>
<dbReference type="InterPro" id="IPR023031">
    <property type="entry name" value="OPRT"/>
</dbReference>
<dbReference type="InterPro" id="IPR004467">
    <property type="entry name" value="Or_phspho_trans_dom"/>
</dbReference>
<dbReference type="InterPro" id="IPR000836">
    <property type="entry name" value="PRibTrfase_dom"/>
</dbReference>
<dbReference type="InterPro" id="IPR029057">
    <property type="entry name" value="PRTase-like"/>
</dbReference>
<dbReference type="NCBIfam" id="TIGR00336">
    <property type="entry name" value="pyrE"/>
    <property type="match status" value="1"/>
</dbReference>
<dbReference type="PANTHER" id="PTHR46683">
    <property type="entry name" value="OROTATE PHOSPHORIBOSYLTRANSFERASE 1-RELATED"/>
    <property type="match status" value="1"/>
</dbReference>
<dbReference type="PANTHER" id="PTHR46683:SF1">
    <property type="entry name" value="OROTATE PHOSPHORIBOSYLTRANSFERASE 1-RELATED"/>
    <property type="match status" value="1"/>
</dbReference>
<dbReference type="Pfam" id="PF00156">
    <property type="entry name" value="Pribosyltran"/>
    <property type="match status" value="1"/>
</dbReference>
<dbReference type="SUPFAM" id="SSF53271">
    <property type="entry name" value="PRTase-like"/>
    <property type="match status" value="1"/>
</dbReference>
<dbReference type="PROSITE" id="PS00103">
    <property type="entry name" value="PUR_PYR_PR_TRANSFER"/>
    <property type="match status" value="1"/>
</dbReference>
<feature type="chain" id="PRO_0000110796" description="Orotate phosphoribosyltransferase">
    <location>
        <begin position="1"/>
        <end position="225"/>
    </location>
</feature>
<feature type="binding site" description="in other chain" evidence="1">
    <location>
        <position position="31"/>
    </location>
    <ligand>
        <name>5-phospho-alpha-D-ribose 1-diphosphate</name>
        <dbReference type="ChEBI" id="CHEBI:58017"/>
        <note>ligand shared between dimeric partners</note>
    </ligand>
</feature>
<feature type="binding site" evidence="1">
    <location>
        <begin position="39"/>
        <end position="40"/>
    </location>
    <ligand>
        <name>orotate</name>
        <dbReference type="ChEBI" id="CHEBI:30839"/>
    </ligand>
</feature>
<feature type="binding site" description="in other chain" evidence="1">
    <location>
        <begin position="78"/>
        <end position="79"/>
    </location>
    <ligand>
        <name>5-phospho-alpha-D-ribose 1-diphosphate</name>
        <dbReference type="ChEBI" id="CHEBI:58017"/>
        <note>ligand shared between dimeric partners</note>
    </ligand>
</feature>
<feature type="binding site" evidence="1">
    <location>
        <position position="105"/>
    </location>
    <ligand>
        <name>5-phospho-alpha-D-ribose 1-diphosphate</name>
        <dbReference type="ChEBI" id="CHEBI:58017"/>
        <note>ligand shared between dimeric partners</note>
    </ligand>
</feature>
<feature type="binding site" description="in other chain" evidence="1">
    <location>
        <position position="106"/>
    </location>
    <ligand>
        <name>5-phospho-alpha-D-ribose 1-diphosphate</name>
        <dbReference type="ChEBI" id="CHEBI:58017"/>
        <note>ligand shared between dimeric partners</note>
    </ligand>
</feature>
<feature type="binding site" evidence="1">
    <location>
        <position position="109"/>
    </location>
    <ligand>
        <name>5-phospho-alpha-D-ribose 1-diphosphate</name>
        <dbReference type="ChEBI" id="CHEBI:58017"/>
        <note>ligand shared between dimeric partners</note>
    </ligand>
</feature>
<feature type="binding site" evidence="1">
    <location>
        <position position="111"/>
    </location>
    <ligand>
        <name>5-phospho-alpha-D-ribose 1-diphosphate</name>
        <dbReference type="ChEBI" id="CHEBI:58017"/>
        <note>ligand shared between dimeric partners</note>
    </ligand>
</feature>
<feature type="binding site" description="in other chain" evidence="1">
    <location>
        <begin position="130"/>
        <end position="138"/>
    </location>
    <ligand>
        <name>5-phospho-alpha-D-ribose 1-diphosphate</name>
        <dbReference type="ChEBI" id="CHEBI:58017"/>
        <note>ligand shared between dimeric partners</note>
    </ligand>
</feature>
<feature type="binding site" evidence="1">
    <location>
        <position position="134"/>
    </location>
    <ligand>
        <name>orotate</name>
        <dbReference type="ChEBI" id="CHEBI:30839"/>
    </ligand>
</feature>
<feature type="binding site" evidence="1">
    <location>
        <position position="163"/>
    </location>
    <ligand>
        <name>orotate</name>
        <dbReference type="ChEBI" id="CHEBI:30839"/>
    </ligand>
</feature>
<feature type="sequence variant" description="In strain: J21.">
    <original>S</original>
    <variation>F</variation>
    <location>
        <position position="8"/>
    </location>
</feature>
<feature type="sequence variant" description="In strain: J15, J17, J24, J25, C5, C7, C24, E4, E9, E12, 184 and ATCC 24064.">
    <original>V</original>
    <variation>I</variation>
    <location>
        <position position="11"/>
    </location>
</feature>
<feature type="sequence variant" description="In strain: J26 and J19.">
    <original>A</original>
    <variation>G</variation>
    <location>
        <position position="57"/>
    </location>
</feature>
<feature type="sequence variant" description="In strain: J25.">
    <original>D</original>
    <variation>N</variation>
    <location>
        <position position="69"/>
    </location>
</feature>
<evidence type="ECO:0000250" key="1"/>
<evidence type="ECO:0000305" key="2"/>
<protein>
    <recommendedName>
        <fullName>Orotate phosphoribosyltransferase</fullName>
        <shortName>OPRT</shortName>
        <shortName>OPRTase</shortName>
        <ecNumber>2.4.2.10</ecNumber>
    </recommendedName>
</protein>
<sequence length="225" mass="24419">MSSQALDSAKVAFIEAAIEHGVLLFGNFTLKSGRQSPYFFNAGLLYSSSLLSTTAQAYAKVLSSSRIPDFDVLFGPAYKGISLAAVSAVSLYQQTGKDIGYCYNRKEKKDHGEGGTMVGAPLKGRIVIIDDVLTSGKAIREAIDILKASPEAKLVGIVQLVDRQEKGQSGSGKSTVQEVEEEFGVPVEPIIGLDDIVKYLESSGKWEKELQEVRKYRAEYGVQRS</sequence>
<name>PYRE_CRYNJ</name>
<accession>P0CS95</accession>
<accession>P0CQ40</accession>
<accession>P18132</accession>
<accession>Q55PW2</accession>
<accession>Q5KDJ6</accession>
<keyword id="KW-0328">Glycosyltransferase</keyword>
<keyword id="KW-0665">Pyrimidine biosynthesis</keyword>
<keyword id="KW-1185">Reference proteome</keyword>
<keyword id="KW-0808">Transferase</keyword>